<proteinExistence type="evidence at protein level"/>
<sequence length="288" mass="33245">MKDRTQELRSAKDSDDEEEVVHVDRDHFMDEFFEQVEEIRGCIEKLSEDVEQVKKQHSAILAAPNPDEKTKQELEDLTADIKKTANKVRSKLKAIEQSIEQEEGLNRSSADLRIRKTQHSTLSRKFVEVMTEYNATQSKYRDRCKDRIQRQLEITGRTTTNEELEDMLESGKLAIFTDDIKMDSQMTKQALNEIETRHNEIIKLETSIRELHDMFVDMAMLVESQGEMIDRIEYNVEHSVDYVERAVSDTKKAVKYQSKARRKKIMIIICCVVLGVVLASSIGGTLGL</sequence>
<comment type="function">
    <text evidence="1">Potentially involved in docking of synaptic vesicles at presynaptic active zones. May mediate Ca(2+)-regulation of exocytosis acrosomal reaction in sperm (By similarity).</text>
</comment>
<comment type="subunit">
    <text evidence="1">Interacts with OTOF. Interacts with SYT6 and SYT8; the interaction is Ca(2+)-dependent (By similarity).</text>
</comment>
<comment type="interaction">
    <interactant intactId="EBI-9071709">
        <id>P61266</id>
    </interactant>
    <interactant intactId="EBI-348517">
        <id>O95870</id>
        <label>ABHD16A</label>
    </interactant>
    <organismsDiffer>false</organismsDiffer>
    <experiments>3</experiments>
</comment>
<comment type="interaction">
    <interactant intactId="EBI-9071709">
        <id>P61266</id>
    </interactant>
    <interactant intactId="EBI-10961679">
        <id>Q5T8D3-2</id>
        <label>ACBD5</label>
    </interactant>
    <organismsDiffer>false</organismsDiffer>
    <experiments>3</experiments>
</comment>
<comment type="interaction">
    <interactant intactId="EBI-9071709">
        <id>P61266</id>
    </interactant>
    <interactant intactId="EBI-13059134">
        <id>Q13520</id>
        <label>AQP6</label>
    </interactant>
    <organismsDiffer>false</organismsDiffer>
    <experiments>3</experiments>
</comment>
<comment type="interaction">
    <interactant intactId="EBI-9071709">
        <id>P61266</id>
    </interactant>
    <interactant intactId="EBI-749204">
        <id>O15155</id>
        <label>BET1</label>
    </interactant>
    <organismsDiffer>false</organismsDiffer>
    <experiments>3</experiments>
</comment>
<comment type="interaction">
    <interactant intactId="EBI-9071709">
        <id>P61266</id>
    </interactant>
    <interactant intactId="EBI-3915253">
        <id>Q15125</id>
        <label>EBP</label>
    </interactant>
    <organismsDiffer>false</organismsDiffer>
    <experiments>3</experiments>
</comment>
<comment type="interaction">
    <interactant intactId="EBI-9071709">
        <id>P61266</id>
    </interactant>
    <interactant intactId="EBI-781551">
        <id>Q9Y282</id>
        <label>ERGIC3</label>
    </interactant>
    <organismsDiffer>false</organismsDiffer>
    <experiments>3</experiments>
</comment>
<comment type="interaction">
    <interactant intactId="EBI-9071709">
        <id>P61266</id>
    </interactant>
    <interactant intactId="EBI-7225287">
        <id>Q96MY7</id>
        <label>FAM161B</label>
    </interactant>
    <organismsDiffer>false</organismsDiffer>
    <experiments>3</experiments>
</comment>
<comment type="interaction">
    <interactant intactId="EBI-9071709">
        <id>P61266</id>
    </interactant>
    <interactant intactId="EBI-18304435">
        <id>Q5JX71</id>
        <label>FAM209A</label>
    </interactant>
    <organismsDiffer>false</organismsDiffer>
    <experiments>3</experiments>
</comment>
<comment type="interaction">
    <interactant intactId="EBI-9071709">
        <id>P61266</id>
    </interactant>
    <interactant intactId="EBI-11993062">
        <id>Q8TBF8</id>
        <label>FAM81A</label>
    </interactant>
    <organismsDiffer>false</organismsDiffer>
    <experiments>3</experiments>
</comment>
<comment type="interaction">
    <interactant intactId="EBI-9071709">
        <id>P61266</id>
    </interactant>
    <interactant intactId="EBI-740282">
        <id>Q9NVF7</id>
        <label>FBXO28</label>
    </interactant>
    <organismsDiffer>false</organismsDiffer>
    <experiments>5</experiments>
</comment>
<comment type="interaction">
    <interactant intactId="EBI-9071709">
        <id>P61266</id>
    </interactant>
    <interactant intactId="EBI-9640259">
        <id>P02671-2</id>
        <label>FGA</label>
    </interactant>
    <organismsDiffer>false</organismsDiffer>
    <experiments>3</experiments>
</comment>
<comment type="interaction">
    <interactant intactId="EBI-9071709">
        <id>P61266</id>
    </interactant>
    <interactant intactId="EBI-17458373">
        <id>P48165</id>
        <label>GJA8</label>
    </interactant>
    <organismsDiffer>false</organismsDiffer>
    <experiments>3</experiments>
</comment>
<comment type="interaction">
    <interactant intactId="EBI-9071709">
        <id>P61266</id>
    </interactant>
    <interactant intactId="EBI-13345167">
        <id>Q8TDT2</id>
        <label>GPR152</label>
    </interactant>
    <organismsDiffer>false</organismsDiffer>
    <experiments>3</experiments>
</comment>
<comment type="interaction">
    <interactant intactId="EBI-9071709">
        <id>P61266</id>
    </interactant>
    <interactant intactId="EBI-2924473">
        <id>O15554</id>
        <label>KCNN4</label>
    </interactant>
    <organismsDiffer>false</organismsDiffer>
    <experiments>3</experiments>
</comment>
<comment type="interaction">
    <interactant intactId="EBI-9071709">
        <id>P61266</id>
    </interactant>
    <interactant intactId="EBI-6163737">
        <id>Q8N4V1</id>
        <label>MMGT1</label>
    </interactant>
    <organismsDiffer>false</organismsDiffer>
    <experiments>3</experiments>
</comment>
<comment type="interaction">
    <interactant intactId="EBI-9071709">
        <id>P61266</id>
    </interactant>
    <interactant intactId="EBI-3921185">
        <id>Q9H115</id>
        <label>NAPB</label>
    </interactant>
    <organismsDiffer>false</organismsDiffer>
    <experiments>5</experiments>
</comment>
<comment type="interaction">
    <interactant intactId="EBI-9071709">
        <id>P61266</id>
    </interactant>
    <interactant intactId="EBI-490676">
        <id>O95721</id>
        <label>SNAP29</label>
    </interactant>
    <organismsDiffer>false</organismsDiffer>
    <experiments>3</experiments>
</comment>
<comment type="interaction">
    <interactant intactId="EBI-9071709">
        <id>P61266</id>
    </interactant>
    <interactant intactId="EBI-10244848">
        <id>Q5SQN1</id>
        <label>SNAP47</label>
    </interactant>
    <organismsDiffer>false</organismsDiffer>
    <experiments>3</experiments>
</comment>
<comment type="interaction">
    <interactant intactId="EBI-9071709">
        <id>P61266</id>
    </interactant>
    <interactant intactId="EBI-11956649">
        <id>P32856-2</id>
        <label>STX2</label>
    </interactant>
    <organismsDiffer>false</organismsDiffer>
    <experiments>3</experiments>
</comment>
<comment type="interaction">
    <interactant intactId="EBI-9071709">
        <id>P61266</id>
    </interactant>
    <interactant intactId="EBI-744942">
        <id>Q12846</id>
        <label>STX4</label>
    </interactant>
    <organismsDiffer>false</organismsDiffer>
    <experiments>3</experiments>
</comment>
<comment type="interaction">
    <interactant intactId="EBI-9071709">
        <id>P61266</id>
    </interactant>
    <interactant intactId="EBI-17684533">
        <id>Q9NRX6</id>
        <label>TMEM167B</label>
    </interactant>
    <organismsDiffer>false</organismsDiffer>
    <experiments>3</experiments>
</comment>
<comment type="interaction">
    <interactant intactId="EBI-9071709">
        <id>P61266</id>
    </interactant>
    <interactant intactId="EBI-359793">
        <id>P40222</id>
        <label>TXLNA</label>
    </interactant>
    <organismsDiffer>false</organismsDiffer>
    <experiments>3</experiments>
</comment>
<comment type="interaction">
    <interactant intactId="EBI-9071709">
        <id>P61266</id>
    </interactant>
    <interactant intactId="EBI-10180829">
        <id>Q7KZS0</id>
        <label>UBE2I</label>
    </interactant>
    <organismsDiffer>false</organismsDiffer>
    <experiments>3</experiments>
</comment>
<comment type="interaction">
    <interactant intactId="EBI-9071709">
        <id>P61266</id>
    </interactant>
    <interactant intactId="EBI-12097582">
        <id>P23763-3</id>
        <label>VAMP1</label>
    </interactant>
    <organismsDiffer>false</organismsDiffer>
    <experiments>3</experiments>
</comment>
<comment type="interaction">
    <interactant intactId="EBI-9071709">
        <id>P61266</id>
    </interactant>
    <interactant intactId="EBI-520113">
        <id>P63027</id>
        <label>VAMP2</label>
    </interactant>
    <organismsDiffer>false</organismsDiffer>
    <experiments>4</experiments>
</comment>
<comment type="interaction">
    <interactant intactId="EBI-9071709">
        <id>P61266</id>
    </interactant>
    <interactant intactId="EBI-10191195">
        <id>O95183</id>
        <label>VAMP5</label>
    </interactant>
    <organismsDiffer>false</organismsDiffer>
    <experiments>3</experiments>
</comment>
<comment type="subcellular location">
    <molecule>Isoform 1</molecule>
    <subcellularLocation>
        <location evidence="9">Membrane</location>
        <topology evidence="9">Single-pass type IV membrane protein</topology>
    </subcellularLocation>
</comment>
<comment type="subcellular location">
    <molecule>Isoform 2</molecule>
    <subcellularLocation>
        <location evidence="6">Nucleus</location>
    </subcellularLocation>
    <subcellularLocation>
        <location evidence="6">Cytoplasm</location>
        <location evidence="6">Cytoskeleton</location>
        <location evidence="6">Microtubule organizing center</location>
        <location evidence="6">Centrosome</location>
    </subcellularLocation>
    <subcellularLocation>
        <location evidence="6">Cytoplasm</location>
        <location evidence="6">Cytoskeleton</location>
        <location evidence="6">Spindle</location>
    </subcellularLocation>
    <text>Colocalizes with Lamin A/C and NuMA in interphasic nuclei, and with NuMA and gamma-tubulin in the pericentrosomal region of the mitotic spindle in dividing cells.</text>
</comment>
<comment type="alternative products">
    <event type="alternative splicing"/>
    <isoform>
        <id>P61266-1</id>
        <name>1</name>
        <sequence type="displayed"/>
    </isoform>
    <isoform>
        <id>P61266-2</id>
        <name>2</name>
        <name>STX1B-DeltaTMD</name>
        <sequence type="described" ref="VSP_047681"/>
    </isoform>
</comment>
<comment type="PTM">
    <text evidence="1">Phosphorylated by CK2.</text>
</comment>
<comment type="disease" evidence="7">
    <disease id="DI-04300">
        <name>Generalized epilepsy with febrile seizures plus 9</name>
        <acronym>GEFSP9</acronym>
        <description>An autosomal dominant neurologic disorder characterized by febrile and/or afebrile seizures manifesting in early childhood. Seizure are variable and include generalized tonic-clonic, atonic, myoclonic, complex partial, and absence types. Most patients have remission of seizures later in childhood with no residual neurologic deficits. Rarely, patients may show mild developmental delay or mild intellectual disabilities.</description>
        <dbReference type="MIM" id="616172"/>
    </disease>
    <text>The disease is caused by variants affecting the gene represented in this entry.</text>
</comment>
<comment type="miscellaneous">
    <molecule>Isoform 2</molecule>
    <text evidence="9">The glycine-rich C-terminus serves as an unconventional nuclear localization signal.</text>
</comment>
<comment type="similarity">
    <text evidence="9">Belongs to the syntaxin family.</text>
</comment>
<name>STX1B_HUMAN</name>
<feature type="chain" id="PRO_0000210192" description="Syntaxin-1B">
    <location>
        <begin position="1"/>
        <end position="288"/>
    </location>
</feature>
<feature type="topological domain" description="Cytoplasmic" evidence="3">
    <location>
        <begin position="1"/>
        <end position="264"/>
    </location>
</feature>
<feature type="transmembrane region" description="Helical; Anchor for type IV membrane protein" evidence="3">
    <location>
        <begin position="265"/>
        <end position="288"/>
    </location>
</feature>
<feature type="domain" description="t-SNARE coiled-coil homology" evidence="4">
    <location>
        <begin position="191"/>
        <end position="253"/>
    </location>
</feature>
<feature type="region of interest" description="Disordered" evidence="5">
    <location>
        <begin position="1"/>
        <end position="20"/>
    </location>
</feature>
<feature type="coiled-coil region" evidence="3">
    <location>
        <begin position="29"/>
        <end position="104"/>
    </location>
</feature>
<feature type="compositionally biased region" description="Basic and acidic residues" evidence="5">
    <location>
        <begin position="1"/>
        <end position="13"/>
    </location>
</feature>
<feature type="modified residue" description="Phosphoserine" evidence="2">
    <location>
        <position position="10"/>
    </location>
</feature>
<feature type="modified residue" description="Phosphoserine" evidence="10">
    <location>
        <position position="14"/>
    </location>
</feature>
<feature type="splice variant" id="VSP_047681" description="In isoform 2." evidence="8">
    <original>KKIMIIICCVVLGVVLASSIGGTLGL</original>
    <variation>VSGAGGLGVGGGAQG</variation>
    <location>
        <begin position="263"/>
        <end position="288"/>
    </location>
</feature>
<feature type="sequence variant" id="VAR_072675" description="In GEFSP9; loss of function mutation; dbSNP:rs724159974." evidence="7">
    <original>V</original>
    <variation>E</variation>
    <location>
        <position position="216"/>
    </location>
</feature>
<feature type="sequence variant" id="VAR_072676" description="In GEFSP9; dbSNP:rs727502806." evidence="7">
    <original>G</original>
    <variation>R</variation>
    <location>
        <position position="226"/>
    </location>
</feature>
<feature type="sequence conflict" description="In Ref. 2; BAA07152." evidence="9" ref="2">
    <original>ELRSAKD</original>
    <variation>VLRTRRN</variation>
    <location>
        <begin position="7"/>
        <end position="13"/>
    </location>
</feature>
<feature type="sequence conflict" description="In Ref. 2; BAA07152." evidence="9" ref="2">
    <original>E</original>
    <variation>K</variation>
    <location>
        <position position="17"/>
    </location>
</feature>
<feature type="sequence conflict" description="In Ref. 2; BAA07152." evidence="9" ref="2">
    <original>V</original>
    <variation>E</variation>
    <location>
        <position position="36"/>
    </location>
</feature>
<feature type="sequence conflict" description="In Ref. 2; BAA07152." evidence="9" ref="2">
    <original>K</original>
    <variation>R</variation>
    <location>
        <position position="69"/>
    </location>
</feature>
<feature type="sequence conflict" description="In Ref. 2; BAA07152." evidence="9" ref="2">
    <original>LNRSSAD</original>
    <variation>STAPRPI</variation>
    <location>
        <begin position="105"/>
        <end position="111"/>
    </location>
</feature>
<feature type="sequence conflict" description="In Ref. 2; BAA07152." evidence="9" ref="2">
    <original>A</original>
    <variation>P</variation>
    <location>
        <position position="174"/>
    </location>
</feature>
<feature type="sequence conflict" description="In Ref. 2; BAA07152." evidence="9" ref="2">
    <original>M</original>
    <variation>I</variation>
    <location>
        <position position="266"/>
    </location>
</feature>
<feature type="sequence conflict" description="In Ref. 2; BAA07152." evidence="9" ref="2">
    <original>G</original>
    <variation>C</variation>
    <location>
        <position position="284"/>
    </location>
</feature>
<reference key="1">
    <citation type="journal article" date="2008" name="Gene">
        <title>Nuclear localization of a novel human syntaxin 1B isoform.</title>
        <authorList>
            <person name="Pereira S."/>
            <person name="Massacrier A."/>
            <person name="Roll P."/>
            <person name="Verine A."/>
            <person name="Etienne-Grimaldi M.C."/>
            <person name="Poitelon Y."/>
            <person name="Robaglia-Schlupp A."/>
            <person name="Jamali S."/>
            <person name="Roeckel-Trevisiol N."/>
            <person name="Royer B."/>
            <person name="Pontarotti P."/>
            <person name="Leveque C."/>
            <person name="Seagar M."/>
            <person name="Levy N."/>
            <person name="Cau P."/>
            <person name="Szepetowski P."/>
        </authorList>
    </citation>
    <scope>NUCLEOTIDE SEQUENCE [MRNA] (ISOFORM 2)</scope>
    <scope>SUBCELLULAR LOCATION (ISOFORM 2)</scope>
</reference>
<reference key="2">
    <citation type="submission" date="1994-08" db="EMBL/GenBank/DDBJ databases">
        <authorList>
            <person name="Fujiwara T."/>
            <person name="Genda M."/>
            <person name="Akagawa K."/>
        </authorList>
    </citation>
    <scope>NUCLEOTIDE SEQUENCE [MRNA] (ISOFORM 1)</scope>
    <source>
        <tissue>Brain</tissue>
    </source>
</reference>
<reference key="3">
    <citation type="submission" date="2001-03" db="EMBL/GenBank/DDBJ databases">
        <title>STX1B2, a new member of the syntaxin gene family.</title>
        <authorList>
            <person name="Gastaldi M."/>
            <person name="Massacrier A."/>
            <person name="Pereira S."/>
            <person name="Roll P."/>
            <person name="Robaglia-Schlupp A."/>
            <person name="Cau P."/>
            <person name="Szepetowski P."/>
        </authorList>
    </citation>
    <scope>NUCLEOTIDE SEQUENCE [MRNA] (ISOFORM 1)</scope>
</reference>
<reference key="4">
    <citation type="journal article" date="2004" name="Nature">
        <title>The sequence and analysis of duplication-rich human chromosome 16.</title>
        <authorList>
            <person name="Martin J."/>
            <person name="Han C."/>
            <person name="Gordon L.A."/>
            <person name="Terry A."/>
            <person name="Prabhakar S."/>
            <person name="She X."/>
            <person name="Xie G."/>
            <person name="Hellsten U."/>
            <person name="Chan Y.M."/>
            <person name="Altherr M."/>
            <person name="Couronne O."/>
            <person name="Aerts A."/>
            <person name="Bajorek E."/>
            <person name="Black S."/>
            <person name="Blumer H."/>
            <person name="Branscomb E."/>
            <person name="Brown N.C."/>
            <person name="Bruno W.J."/>
            <person name="Buckingham J.M."/>
            <person name="Callen D.F."/>
            <person name="Campbell C.S."/>
            <person name="Campbell M.L."/>
            <person name="Campbell E.W."/>
            <person name="Caoile C."/>
            <person name="Challacombe J.F."/>
            <person name="Chasteen L.A."/>
            <person name="Chertkov O."/>
            <person name="Chi H.C."/>
            <person name="Christensen M."/>
            <person name="Clark L.M."/>
            <person name="Cohn J.D."/>
            <person name="Denys M."/>
            <person name="Detter J.C."/>
            <person name="Dickson M."/>
            <person name="Dimitrijevic-Bussod M."/>
            <person name="Escobar J."/>
            <person name="Fawcett J.J."/>
            <person name="Flowers D."/>
            <person name="Fotopulos D."/>
            <person name="Glavina T."/>
            <person name="Gomez M."/>
            <person name="Gonzales E."/>
            <person name="Goodstein D."/>
            <person name="Goodwin L.A."/>
            <person name="Grady D.L."/>
            <person name="Grigoriev I."/>
            <person name="Groza M."/>
            <person name="Hammon N."/>
            <person name="Hawkins T."/>
            <person name="Haydu L."/>
            <person name="Hildebrand C.E."/>
            <person name="Huang W."/>
            <person name="Israni S."/>
            <person name="Jett J."/>
            <person name="Jewett P.B."/>
            <person name="Kadner K."/>
            <person name="Kimball H."/>
            <person name="Kobayashi A."/>
            <person name="Krawczyk M.-C."/>
            <person name="Leyba T."/>
            <person name="Longmire J.L."/>
            <person name="Lopez F."/>
            <person name="Lou Y."/>
            <person name="Lowry S."/>
            <person name="Ludeman T."/>
            <person name="Manohar C.F."/>
            <person name="Mark G.A."/>
            <person name="McMurray K.L."/>
            <person name="Meincke L.J."/>
            <person name="Morgan J."/>
            <person name="Moyzis R.K."/>
            <person name="Mundt M.O."/>
            <person name="Munk A.C."/>
            <person name="Nandkeshwar R.D."/>
            <person name="Pitluck S."/>
            <person name="Pollard M."/>
            <person name="Predki P."/>
            <person name="Parson-Quintana B."/>
            <person name="Ramirez L."/>
            <person name="Rash S."/>
            <person name="Retterer J."/>
            <person name="Ricke D.O."/>
            <person name="Robinson D.L."/>
            <person name="Rodriguez A."/>
            <person name="Salamov A."/>
            <person name="Saunders E.H."/>
            <person name="Scott D."/>
            <person name="Shough T."/>
            <person name="Stallings R.L."/>
            <person name="Stalvey M."/>
            <person name="Sutherland R.D."/>
            <person name="Tapia R."/>
            <person name="Tesmer J.G."/>
            <person name="Thayer N."/>
            <person name="Thompson L.S."/>
            <person name="Tice H."/>
            <person name="Torney D.C."/>
            <person name="Tran-Gyamfi M."/>
            <person name="Tsai M."/>
            <person name="Ulanovsky L.E."/>
            <person name="Ustaszewska A."/>
            <person name="Vo N."/>
            <person name="White P.S."/>
            <person name="Williams A.L."/>
            <person name="Wills P.L."/>
            <person name="Wu J.-R."/>
            <person name="Wu K."/>
            <person name="Yang J."/>
            <person name="DeJong P."/>
            <person name="Bruce D."/>
            <person name="Doggett N.A."/>
            <person name="Deaven L."/>
            <person name="Schmutz J."/>
            <person name="Grimwood J."/>
            <person name="Richardson P."/>
            <person name="Rokhsar D.S."/>
            <person name="Eichler E.E."/>
            <person name="Gilna P."/>
            <person name="Lucas S.M."/>
            <person name="Myers R.M."/>
            <person name="Rubin E.M."/>
            <person name="Pennacchio L.A."/>
        </authorList>
    </citation>
    <scope>NUCLEOTIDE SEQUENCE [LARGE SCALE GENOMIC DNA]</scope>
</reference>
<reference key="5">
    <citation type="journal article" date="2004" name="Genome Res.">
        <title>The status, quality, and expansion of the NIH full-length cDNA project: the Mammalian Gene Collection (MGC).</title>
        <authorList>
            <consortium name="The MGC Project Team"/>
        </authorList>
    </citation>
    <scope>NUCLEOTIDE SEQUENCE [LARGE SCALE MRNA] (ISOFORM 1)</scope>
    <source>
        <tissue>Eye</tissue>
    </source>
</reference>
<reference key="6">
    <citation type="journal article" date="2011" name="Sci. Signal.">
        <title>System-wide temporal characterization of the proteome and phosphoproteome of human embryonic stem cell differentiation.</title>
        <authorList>
            <person name="Rigbolt K.T."/>
            <person name="Prokhorova T.A."/>
            <person name="Akimov V."/>
            <person name="Henningsen J."/>
            <person name="Johansen P.T."/>
            <person name="Kratchmarova I."/>
            <person name="Kassem M."/>
            <person name="Mann M."/>
            <person name="Olsen J.V."/>
            <person name="Blagoev B."/>
        </authorList>
    </citation>
    <scope>PHOSPHORYLATION [LARGE SCALE ANALYSIS] AT SER-14</scope>
    <scope>IDENTIFICATION BY MASS SPECTROMETRY [LARGE SCALE ANALYSIS]</scope>
</reference>
<reference key="7">
    <citation type="journal article" date="2014" name="Nat. Genet.">
        <title>Mutations in STX1B, encoding a presynaptic protein, cause fever-associated epilepsy syndromes.</title>
        <authorList>
            <consortium name="EuroEPINOMICS RES Consortium"/>
            <person name="Schubert J."/>
            <person name="Siekierska A."/>
            <person name="Langlois M."/>
            <person name="May P."/>
            <person name="Huneau C."/>
            <person name="Becker F."/>
            <person name="Muhle H."/>
            <person name="Suls A."/>
            <person name="Lemke J.R."/>
            <person name="de Kovel C.G."/>
            <person name="Thiele H."/>
            <person name="Konrad K."/>
            <person name="Kawalia A."/>
            <person name="Toliat M.R."/>
            <person name="Sander T."/>
            <person name="Rueschendorf F."/>
            <person name="Caliebe A."/>
            <person name="Nagel I."/>
            <person name="Kohl B."/>
            <person name="Kecskes A."/>
            <person name="Jacmin M."/>
            <person name="Hardies K."/>
            <person name="Weckhuysen S."/>
            <person name="Riesch E."/>
            <person name="Dorn T."/>
            <person name="Brilstra E.H."/>
            <person name="Baulac S."/>
            <person name="Moeller R.S."/>
            <person name="Hjalgrim H."/>
            <person name="Koeleman B.P."/>
            <person name="Jurkat-Rott K."/>
            <person name="Lehman-Horn F."/>
            <person name="Roach J.C."/>
            <person name="Glusman G."/>
            <person name="Hood L."/>
            <person name="Galas D.J."/>
            <person name="Martin B."/>
            <person name="de Witte P.A."/>
            <person name="Biskup S."/>
            <person name="De Jonghe P."/>
            <person name="Helbig I."/>
            <person name="Balling R."/>
            <person name="Nuernberg P."/>
            <person name="Crawford A.D."/>
            <person name="Esguerra C.V."/>
            <person name="Weber Y.G."/>
            <person name="Lerche H."/>
        </authorList>
    </citation>
    <scope>INVOLVEMENT IN GEFSP9</scope>
    <scope>VARIANTS GEFSP9 GLU-216 AND ARG-226</scope>
    <scope>CHARACTERIZATION OF VARIANT GEFSP9 GLU-216</scope>
</reference>
<organism>
    <name type="scientific">Homo sapiens</name>
    <name type="common">Human</name>
    <dbReference type="NCBI Taxonomy" id="9606"/>
    <lineage>
        <taxon>Eukaryota</taxon>
        <taxon>Metazoa</taxon>
        <taxon>Chordata</taxon>
        <taxon>Craniata</taxon>
        <taxon>Vertebrata</taxon>
        <taxon>Euteleostomi</taxon>
        <taxon>Mammalia</taxon>
        <taxon>Eutheria</taxon>
        <taxon>Euarchontoglires</taxon>
        <taxon>Primates</taxon>
        <taxon>Haplorrhini</taxon>
        <taxon>Catarrhini</taxon>
        <taxon>Hominidae</taxon>
        <taxon>Homo</taxon>
    </lineage>
</organism>
<dbReference type="EMBL" id="AY995211">
    <property type="protein sequence ID" value="AAY45889.1"/>
    <property type="molecule type" value="mRNA"/>
</dbReference>
<dbReference type="EMBL" id="D37933">
    <property type="protein sequence ID" value="BAA07152.1"/>
    <property type="molecule type" value="mRNA"/>
</dbReference>
<dbReference type="EMBL" id="AY028792">
    <property type="protein sequence ID" value="AAK27267.1"/>
    <property type="molecule type" value="mRNA"/>
</dbReference>
<dbReference type="EMBL" id="AC135048">
    <property type="status" value="NOT_ANNOTATED_CDS"/>
    <property type="molecule type" value="Genomic_DNA"/>
</dbReference>
<dbReference type="EMBL" id="AC135050">
    <property type="status" value="NOT_ANNOTATED_CDS"/>
    <property type="molecule type" value="Genomic_DNA"/>
</dbReference>
<dbReference type="EMBL" id="BC062298">
    <property type="protein sequence ID" value="AAH62298.1"/>
    <property type="molecule type" value="mRNA"/>
</dbReference>
<dbReference type="CCDS" id="CCDS10699.1">
    <molecule id="P61266-1"/>
</dbReference>
<dbReference type="RefSeq" id="NP_443106.1">
    <molecule id="P61266-1"/>
    <property type="nucleotide sequence ID" value="NM_052874.5"/>
</dbReference>
<dbReference type="SMR" id="P61266"/>
<dbReference type="BioGRID" id="125203">
    <property type="interactions" value="40"/>
</dbReference>
<dbReference type="FunCoup" id="P61266">
    <property type="interactions" value="1063"/>
</dbReference>
<dbReference type="IntAct" id="P61266">
    <property type="interactions" value="38"/>
</dbReference>
<dbReference type="MINT" id="P61266"/>
<dbReference type="STRING" id="9606.ENSP00000215095"/>
<dbReference type="GlyGen" id="P61266">
    <property type="glycosylation" value="1 site, 1 O-linked glycan (1 site)"/>
</dbReference>
<dbReference type="iPTMnet" id="P61266"/>
<dbReference type="PhosphoSitePlus" id="P61266"/>
<dbReference type="SwissPalm" id="P61266"/>
<dbReference type="BioMuta" id="STX1B"/>
<dbReference type="DMDM" id="47117086"/>
<dbReference type="jPOST" id="P61266"/>
<dbReference type="MassIVE" id="P61266"/>
<dbReference type="PaxDb" id="9606-ENSP00000215095"/>
<dbReference type="PeptideAtlas" id="P61266"/>
<dbReference type="ProteomicsDB" id="57288">
    <molecule id="P61266-1"/>
</dbReference>
<dbReference type="ProteomicsDB" id="61523"/>
<dbReference type="Antibodypedia" id="67397">
    <property type="antibodies" value="42 antibodies from 17 providers"/>
</dbReference>
<dbReference type="DNASU" id="112755"/>
<dbReference type="Ensembl" id="ENST00000215095.11">
    <molecule id="P61266-1"/>
    <property type="protein sequence ID" value="ENSP00000215095.5"/>
    <property type="gene ID" value="ENSG00000099365.11"/>
</dbReference>
<dbReference type="Ensembl" id="ENST00000565419.2">
    <molecule id="P61266-2"/>
    <property type="protein sequence ID" value="ENSP00000455899.1"/>
    <property type="gene ID" value="ENSG00000099365.11"/>
</dbReference>
<dbReference type="GeneID" id="112755"/>
<dbReference type="KEGG" id="hsa:112755"/>
<dbReference type="MANE-Select" id="ENST00000215095.11">
    <property type="protein sequence ID" value="ENSP00000215095.5"/>
    <property type="RefSeq nucleotide sequence ID" value="NM_052874.5"/>
    <property type="RefSeq protein sequence ID" value="NP_443106.1"/>
</dbReference>
<dbReference type="UCSC" id="uc010cad.3">
    <molecule id="P61266-1"/>
    <property type="organism name" value="human"/>
</dbReference>
<dbReference type="AGR" id="HGNC:18539"/>
<dbReference type="CTD" id="112755"/>
<dbReference type="DisGeNET" id="112755"/>
<dbReference type="GeneCards" id="STX1B"/>
<dbReference type="GeneReviews" id="STX1B"/>
<dbReference type="HGNC" id="HGNC:18539">
    <property type="gene designation" value="STX1B"/>
</dbReference>
<dbReference type="HPA" id="ENSG00000099365">
    <property type="expression patterns" value="Tissue enriched (brain)"/>
</dbReference>
<dbReference type="MalaCards" id="STX1B"/>
<dbReference type="MIM" id="601485">
    <property type="type" value="gene"/>
</dbReference>
<dbReference type="MIM" id="616172">
    <property type="type" value="phenotype"/>
</dbReference>
<dbReference type="neXtProt" id="NX_P61266"/>
<dbReference type="OpenTargets" id="ENSG00000099365"/>
<dbReference type="Orphanet" id="36387">
    <property type="disease" value="Genetic epilepsy with febrile seizure plus"/>
</dbReference>
<dbReference type="PharmGKB" id="PA38345"/>
<dbReference type="VEuPathDB" id="HostDB:ENSG00000099365"/>
<dbReference type="eggNOG" id="KOG0810">
    <property type="taxonomic scope" value="Eukaryota"/>
</dbReference>
<dbReference type="GeneTree" id="ENSGT01030000234627"/>
<dbReference type="HOGENOM" id="CLU_042423_2_2_1"/>
<dbReference type="InParanoid" id="P61266"/>
<dbReference type="OMA" id="RWICFIL"/>
<dbReference type="OrthoDB" id="10255013at2759"/>
<dbReference type="PAN-GO" id="P61266">
    <property type="GO annotations" value="12 GO annotations based on evolutionary models"/>
</dbReference>
<dbReference type="PhylomeDB" id="P61266"/>
<dbReference type="TreeFam" id="TF313763"/>
<dbReference type="PathwayCommons" id="P61266"/>
<dbReference type="Reactome" id="R-HSA-5250971">
    <property type="pathway name" value="Toxicity of botulinum toxin type C (botC)"/>
</dbReference>
<dbReference type="Reactome" id="R-HSA-5682910">
    <property type="pathway name" value="LGI-ADAM interactions"/>
</dbReference>
<dbReference type="SignaLink" id="P61266"/>
<dbReference type="BioGRID-ORCS" id="112755">
    <property type="hits" value="7 hits in 1157 CRISPR screens"/>
</dbReference>
<dbReference type="CD-CODE" id="8C2F96ED">
    <property type="entry name" value="Centrosome"/>
</dbReference>
<dbReference type="CD-CODE" id="FB4E32DD">
    <property type="entry name" value="Presynaptic clusters and postsynaptic densities"/>
</dbReference>
<dbReference type="ChiTaRS" id="STX1B">
    <property type="organism name" value="human"/>
</dbReference>
<dbReference type="GeneWiki" id="STX1B"/>
<dbReference type="GenomeRNAi" id="112755"/>
<dbReference type="Pharos" id="P61266">
    <property type="development level" value="Tbio"/>
</dbReference>
<dbReference type="PRO" id="PR:P61266"/>
<dbReference type="Proteomes" id="UP000005640">
    <property type="component" value="Chromosome 16"/>
</dbReference>
<dbReference type="RNAct" id="P61266">
    <property type="molecule type" value="protein"/>
</dbReference>
<dbReference type="Bgee" id="ENSG00000099365">
    <property type="expression patterns" value="Expressed in right hemisphere of cerebellum and 115 other cell types or tissues"/>
</dbReference>
<dbReference type="GO" id="GO:0030424">
    <property type="term" value="C:axon"/>
    <property type="evidence" value="ECO:0007669"/>
    <property type="project" value="Ensembl"/>
</dbReference>
<dbReference type="GO" id="GO:0005813">
    <property type="term" value="C:centrosome"/>
    <property type="evidence" value="ECO:0000314"/>
    <property type="project" value="ParkinsonsUK-UCL"/>
</dbReference>
<dbReference type="GO" id="GO:0005737">
    <property type="term" value="C:cytoplasm"/>
    <property type="evidence" value="ECO:0000314"/>
    <property type="project" value="ParkinsonsUK-UCL"/>
</dbReference>
<dbReference type="GO" id="GO:0005829">
    <property type="term" value="C:cytosol"/>
    <property type="evidence" value="ECO:0000304"/>
    <property type="project" value="Reactome"/>
</dbReference>
<dbReference type="GO" id="GO:0012505">
    <property type="term" value="C:endomembrane system"/>
    <property type="evidence" value="ECO:0000318"/>
    <property type="project" value="GO_Central"/>
</dbReference>
<dbReference type="GO" id="GO:0016020">
    <property type="term" value="C:membrane"/>
    <property type="evidence" value="ECO:0000250"/>
    <property type="project" value="ParkinsonsUK-UCL"/>
</dbReference>
<dbReference type="GO" id="GO:0031594">
    <property type="term" value="C:neuromuscular junction"/>
    <property type="evidence" value="ECO:0007669"/>
    <property type="project" value="Ensembl"/>
</dbReference>
<dbReference type="GO" id="GO:0005652">
    <property type="term" value="C:nuclear lamina"/>
    <property type="evidence" value="ECO:0000314"/>
    <property type="project" value="ParkinsonsUK-UCL"/>
</dbReference>
<dbReference type="GO" id="GO:0005654">
    <property type="term" value="C:nucleoplasm"/>
    <property type="evidence" value="ECO:0000314"/>
    <property type="project" value="ParkinsonsUK-UCL"/>
</dbReference>
<dbReference type="GO" id="GO:0005634">
    <property type="term" value="C:nucleus"/>
    <property type="evidence" value="ECO:0000314"/>
    <property type="project" value="ParkinsonsUK-UCL"/>
</dbReference>
<dbReference type="GO" id="GO:0005886">
    <property type="term" value="C:plasma membrane"/>
    <property type="evidence" value="ECO:0000250"/>
    <property type="project" value="ParkinsonsUK-UCL"/>
</dbReference>
<dbReference type="GO" id="GO:0048787">
    <property type="term" value="C:presynaptic active zone membrane"/>
    <property type="evidence" value="ECO:0000318"/>
    <property type="project" value="GO_Central"/>
</dbReference>
<dbReference type="GO" id="GO:0031201">
    <property type="term" value="C:SNARE complex"/>
    <property type="evidence" value="ECO:0000318"/>
    <property type="project" value="GO_Central"/>
</dbReference>
<dbReference type="GO" id="GO:0005819">
    <property type="term" value="C:spindle"/>
    <property type="evidence" value="ECO:0007669"/>
    <property type="project" value="UniProtKB-SubCell"/>
</dbReference>
<dbReference type="GO" id="GO:0019901">
    <property type="term" value="F:protein kinase binding"/>
    <property type="evidence" value="ECO:0000250"/>
    <property type="project" value="ParkinsonsUK-UCL"/>
</dbReference>
<dbReference type="GO" id="GO:0005102">
    <property type="term" value="F:signaling receptor binding"/>
    <property type="evidence" value="ECO:0007669"/>
    <property type="project" value="Ensembl"/>
</dbReference>
<dbReference type="GO" id="GO:0005484">
    <property type="term" value="F:SNAP receptor activity"/>
    <property type="evidence" value="ECO:0000318"/>
    <property type="project" value="GO_Central"/>
</dbReference>
<dbReference type="GO" id="GO:0000149">
    <property type="term" value="F:SNARE binding"/>
    <property type="evidence" value="ECO:0000318"/>
    <property type="project" value="GO_Central"/>
</dbReference>
<dbReference type="GO" id="GO:0048791">
    <property type="term" value="P:calcium ion-regulated exocytosis of neurotransmitter"/>
    <property type="evidence" value="ECO:0007669"/>
    <property type="project" value="Ensembl"/>
</dbReference>
<dbReference type="GO" id="GO:0006887">
    <property type="term" value="P:exocytosis"/>
    <property type="evidence" value="ECO:0000318"/>
    <property type="project" value="GO_Central"/>
</dbReference>
<dbReference type="GO" id="GO:0006886">
    <property type="term" value="P:intracellular protein transport"/>
    <property type="evidence" value="ECO:0000318"/>
    <property type="project" value="GO_Central"/>
</dbReference>
<dbReference type="GO" id="GO:1905302">
    <property type="term" value="P:negative regulation of macropinocytosis"/>
    <property type="evidence" value="ECO:0000250"/>
    <property type="project" value="ParkinsonsUK-UCL"/>
</dbReference>
<dbReference type="GO" id="GO:0010977">
    <property type="term" value="P:negative regulation of neuron projection development"/>
    <property type="evidence" value="ECO:0000250"/>
    <property type="project" value="ParkinsonsUK-UCL"/>
</dbReference>
<dbReference type="GO" id="GO:1903422">
    <property type="term" value="P:negative regulation of synaptic vesicle recycling"/>
    <property type="evidence" value="ECO:0007669"/>
    <property type="project" value="Ensembl"/>
</dbReference>
<dbReference type="GO" id="GO:2000463">
    <property type="term" value="P:positive regulation of excitatory postsynaptic potential"/>
    <property type="evidence" value="ECO:0000250"/>
    <property type="project" value="ParkinsonsUK-UCL"/>
</dbReference>
<dbReference type="GO" id="GO:0001956">
    <property type="term" value="P:positive regulation of neurotransmitter secretion"/>
    <property type="evidence" value="ECO:0000250"/>
    <property type="project" value="ParkinsonsUK-UCL"/>
</dbReference>
<dbReference type="GO" id="GO:1904050">
    <property type="term" value="P:positive regulation of spontaneous neurotransmitter secretion"/>
    <property type="evidence" value="ECO:0007669"/>
    <property type="project" value="Ensembl"/>
</dbReference>
<dbReference type="GO" id="GO:0010468">
    <property type="term" value="P:regulation of gene expression"/>
    <property type="evidence" value="ECO:0000250"/>
    <property type="project" value="ParkinsonsUK-UCL"/>
</dbReference>
<dbReference type="GO" id="GO:0060025">
    <property type="term" value="P:regulation of synaptic activity"/>
    <property type="evidence" value="ECO:0000250"/>
    <property type="project" value="ParkinsonsUK-UCL"/>
</dbReference>
<dbReference type="GO" id="GO:0010807">
    <property type="term" value="P:regulation of synaptic vesicle priming"/>
    <property type="evidence" value="ECO:0000250"/>
    <property type="project" value="ParkinsonsUK-UCL"/>
</dbReference>
<dbReference type="GO" id="GO:0061669">
    <property type="term" value="P:spontaneous neurotransmitter secretion"/>
    <property type="evidence" value="ECO:0007669"/>
    <property type="project" value="Ensembl"/>
</dbReference>
<dbReference type="GO" id="GO:0016081">
    <property type="term" value="P:synaptic vesicle docking"/>
    <property type="evidence" value="ECO:0000250"/>
    <property type="project" value="ParkinsonsUK-UCL"/>
</dbReference>
<dbReference type="GO" id="GO:0031629">
    <property type="term" value="P:synaptic vesicle fusion to presynaptic active zone membrane"/>
    <property type="evidence" value="ECO:0000318"/>
    <property type="project" value="GO_Central"/>
</dbReference>
<dbReference type="GO" id="GO:0048278">
    <property type="term" value="P:vesicle docking"/>
    <property type="evidence" value="ECO:0000318"/>
    <property type="project" value="GO_Central"/>
</dbReference>
<dbReference type="GO" id="GO:0006904">
    <property type="term" value="P:vesicle docking involved in exocytosis"/>
    <property type="evidence" value="ECO:0000250"/>
    <property type="project" value="ParkinsonsUK-UCL"/>
</dbReference>
<dbReference type="CDD" id="cd15880">
    <property type="entry name" value="SNARE_syntaxin1"/>
    <property type="match status" value="1"/>
</dbReference>
<dbReference type="CDD" id="cd00179">
    <property type="entry name" value="SynN"/>
    <property type="match status" value="1"/>
</dbReference>
<dbReference type="FunFam" id="1.20.58.70:FF:000042">
    <property type="entry name" value="Syntaxin 11b, tandem duplicate 2"/>
    <property type="match status" value="1"/>
</dbReference>
<dbReference type="FunFam" id="1.20.5.110:FF:000005">
    <property type="entry name" value="Syntaxin 1B"/>
    <property type="match status" value="1"/>
</dbReference>
<dbReference type="Gene3D" id="1.20.5.110">
    <property type="match status" value="1"/>
</dbReference>
<dbReference type="Gene3D" id="1.20.58.70">
    <property type="match status" value="1"/>
</dbReference>
<dbReference type="InterPro" id="IPR010989">
    <property type="entry name" value="SNARE"/>
</dbReference>
<dbReference type="InterPro" id="IPR045242">
    <property type="entry name" value="Syntaxin"/>
</dbReference>
<dbReference type="InterPro" id="IPR006012">
    <property type="entry name" value="Syntaxin/epimorphin_CS"/>
</dbReference>
<dbReference type="InterPro" id="IPR006011">
    <property type="entry name" value="Syntaxin_N"/>
</dbReference>
<dbReference type="InterPro" id="IPR000727">
    <property type="entry name" value="T_SNARE_dom"/>
</dbReference>
<dbReference type="PANTHER" id="PTHR19957">
    <property type="entry name" value="SYNTAXIN"/>
    <property type="match status" value="1"/>
</dbReference>
<dbReference type="PANTHER" id="PTHR19957:SF334">
    <property type="entry name" value="SYNTAXIN-1B"/>
    <property type="match status" value="1"/>
</dbReference>
<dbReference type="Pfam" id="PF05739">
    <property type="entry name" value="SNARE"/>
    <property type="match status" value="1"/>
</dbReference>
<dbReference type="Pfam" id="PF00804">
    <property type="entry name" value="Syntaxin"/>
    <property type="match status" value="1"/>
</dbReference>
<dbReference type="SMART" id="SM00503">
    <property type="entry name" value="SynN"/>
    <property type="match status" value="1"/>
</dbReference>
<dbReference type="SMART" id="SM00397">
    <property type="entry name" value="t_SNARE"/>
    <property type="match status" value="1"/>
</dbReference>
<dbReference type="SUPFAM" id="SSF47661">
    <property type="entry name" value="t-snare proteins"/>
    <property type="match status" value="1"/>
</dbReference>
<dbReference type="PROSITE" id="PS00914">
    <property type="entry name" value="SYNTAXIN"/>
    <property type="match status" value="1"/>
</dbReference>
<dbReference type="PROSITE" id="PS50192">
    <property type="entry name" value="T_SNARE"/>
    <property type="match status" value="1"/>
</dbReference>
<evidence type="ECO:0000250" key="1"/>
<evidence type="ECO:0000250" key="2">
    <source>
        <dbReference type="UniProtKB" id="P61264"/>
    </source>
</evidence>
<evidence type="ECO:0000255" key="3"/>
<evidence type="ECO:0000255" key="4">
    <source>
        <dbReference type="PROSITE-ProRule" id="PRU00202"/>
    </source>
</evidence>
<evidence type="ECO:0000256" key="5">
    <source>
        <dbReference type="SAM" id="MobiDB-lite"/>
    </source>
</evidence>
<evidence type="ECO:0000269" key="6">
    <source>
    </source>
</evidence>
<evidence type="ECO:0000269" key="7">
    <source>
    </source>
</evidence>
<evidence type="ECO:0000303" key="8">
    <source>
    </source>
</evidence>
<evidence type="ECO:0000305" key="9"/>
<evidence type="ECO:0007744" key="10">
    <source>
    </source>
</evidence>
<accession>P61266</accession>
<accession>Q15531</accession>
<accession>Q2VPS2</accession>
<keyword id="KW-0025">Alternative splicing</keyword>
<keyword id="KW-0175">Coiled coil</keyword>
<keyword id="KW-0963">Cytoplasm</keyword>
<keyword id="KW-0206">Cytoskeleton</keyword>
<keyword id="KW-0225">Disease variant</keyword>
<keyword id="KW-0887">Epilepsy</keyword>
<keyword id="KW-0472">Membrane</keyword>
<keyword id="KW-0532">Neurotransmitter transport</keyword>
<keyword id="KW-0539">Nucleus</keyword>
<keyword id="KW-0597">Phosphoprotein</keyword>
<keyword id="KW-1267">Proteomics identification</keyword>
<keyword id="KW-1185">Reference proteome</keyword>
<keyword id="KW-0812">Transmembrane</keyword>
<keyword id="KW-1133">Transmembrane helix</keyword>
<keyword id="KW-0813">Transport</keyword>
<gene>
    <name type="primary">STX1B</name>
    <name type="synonym">STX1B1</name>
    <name type="synonym">STX1B2</name>
</gene>
<protein>
    <recommendedName>
        <fullName>Syntaxin-1B</fullName>
    </recommendedName>
    <alternativeName>
        <fullName>Syntaxin-1B1</fullName>
    </alternativeName>
    <alternativeName>
        <fullName>Syntaxin-1B2</fullName>
    </alternativeName>
</protein>